<reference key="1">
    <citation type="submission" date="2006-04" db="EMBL/GenBank/DDBJ databases">
        <title>Complete sequence of chromosome of Deinococcus geothermalis DSM 11300.</title>
        <authorList>
            <person name="Copeland A."/>
            <person name="Lucas S."/>
            <person name="Lapidus A."/>
            <person name="Barry K."/>
            <person name="Detter J.C."/>
            <person name="Glavina del Rio T."/>
            <person name="Hammon N."/>
            <person name="Israni S."/>
            <person name="Dalin E."/>
            <person name="Tice H."/>
            <person name="Pitluck S."/>
            <person name="Brettin T."/>
            <person name="Bruce D."/>
            <person name="Han C."/>
            <person name="Tapia R."/>
            <person name="Saunders E."/>
            <person name="Gilna P."/>
            <person name="Schmutz J."/>
            <person name="Larimer F."/>
            <person name="Land M."/>
            <person name="Hauser L."/>
            <person name="Kyrpides N."/>
            <person name="Kim E."/>
            <person name="Daly M.J."/>
            <person name="Fredrickson J.K."/>
            <person name="Makarova K.S."/>
            <person name="Gaidamakova E.K."/>
            <person name="Zhai M."/>
            <person name="Richardson P."/>
        </authorList>
    </citation>
    <scope>NUCLEOTIDE SEQUENCE [LARGE SCALE GENOMIC DNA]</scope>
    <source>
        <strain>DSM 11300 / CIP 105573 / AG-3a</strain>
    </source>
</reference>
<proteinExistence type="inferred from homology"/>
<protein>
    <recommendedName>
        <fullName evidence="2">D-alanine--D-alanine ligase</fullName>
        <ecNumber evidence="2">6.3.2.4</ecNumber>
    </recommendedName>
    <alternativeName>
        <fullName evidence="2">D-Ala-D-Ala ligase</fullName>
    </alternativeName>
    <alternativeName>
        <fullName evidence="2">D-alanylalanine synthetase</fullName>
    </alternativeName>
</protein>
<dbReference type="EC" id="6.3.2.4" evidence="2"/>
<dbReference type="EMBL" id="CP000359">
    <property type="protein sequence ID" value="ABF46415.1"/>
    <property type="molecule type" value="Genomic_DNA"/>
</dbReference>
<dbReference type="RefSeq" id="WP_011531240.1">
    <property type="nucleotide sequence ID" value="NC_008025.1"/>
</dbReference>
<dbReference type="SMR" id="Q1IWG9"/>
<dbReference type="STRING" id="319795.Dgeo_2121"/>
<dbReference type="KEGG" id="dge:Dgeo_2121"/>
<dbReference type="eggNOG" id="COG1181">
    <property type="taxonomic scope" value="Bacteria"/>
</dbReference>
<dbReference type="HOGENOM" id="CLU_039268_0_0_0"/>
<dbReference type="UniPathway" id="UPA00219"/>
<dbReference type="Proteomes" id="UP000002431">
    <property type="component" value="Chromosome"/>
</dbReference>
<dbReference type="GO" id="GO:0005829">
    <property type="term" value="C:cytosol"/>
    <property type="evidence" value="ECO:0007669"/>
    <property type="project" value="TreeGrafter"/>
</dbReference>
<dbReference type="GO" id="GO:0005524">
    <property type="term" value="F:ATP binding"/>
    <property type="evidence" value="ECO:0007669"/>
    <property type="project" value="UniProtKB-KW"/>
</dbReference>
<dbReference type="GO" id="GO:0008716">
    <property type="term" value="F:D-alanine-D-alanine ligase activity"/>
    <property type="evidence" value="ECO:0007669"/>
    <property type="project" value="UniProtKB-UniRule"/>
</dbReference>
<dbReference type="GO" id="GO:0046872">
    <property type="term" value="F:metal ion binding"/>
    <property type="evidence" value="ECO:0007669"/>
    <property type="project" value="UniProtKB-KW"/>
</dbReference>
<dbReference type="GO" id="GO:0071555">
    <property type="term" value="P:cell wall organization"/>
    <property type="evidence" value="ECO:0007669"/>
    <property type="project" value="UniProtKB-KW"/>
</dbReference>
<dbReference type="GO" id="GO:0009252">
    <property type="term" value="P:peptidoglycan biosynthetic process"/>
    <property type="evidence" value="ECO:0007669"/>
    <property type="project" value="UniProtKB-UniRule"/>
</dbReference>
<dbReference type="GO" id="GO:0008360">
    <property type="term" value="P:regulation of cell shape"/>
    <property type="evidence" value="ECO:0007669"/>
    <property type="project" value="UniProtKB-KW"/>
</dbReference>
<dbReference type="FunFam" id="3.30.1490.20:FF:000007">
    <property type="entry name" value="D-alanine--D-alanine ligase"/>
    <property type="match status" value="1"/>
</dbReference>
<dbReference type="FunFam" id="3.30.470.20:FF:000008">
    <property type="entry name" value="D-alanine--D-alanine ligase"/>
    <property type="match status" value="1"/>
</dbReference>
<dbReference type="Gene3D" id="3.40.50.20">
    <property type="match status" value="1"/>
</dbReference>
<dbReference type="Gene3D" id="3.30.1490.20">
    <property type="entry name" value="ATP-grasp fold, A domain"/>
    <property type="match status" value="1"/>
</dbReference>
<dbReference type="Gene3D" id="3.30.470.20">
    <property type="entry name" value="ATP-grasp fold, B domain"/>
    <property type="match status" value="1"/>
</dbReference>
<dbReference type="HAMAP" id="MF_00047">
    <property type="entry name" value="Dala_Dala_lig"/>
    <property type="match status" value="1"/>
</dbReference>
<dbReference type="InterPro" id="IPR011761">
    <property type="entry name" value="ATP-grasp"/>
</dbReference>
<dbReference type="InterPro" id="IPR013815">
    <property type="entry name" value="ATP_grasp_subdomain_1"/>
</dbReference>
<dbReference type="InterPro" id="IPR000291">
    <property type="entry name" value="D-Ala_lig_Van_CS"/>
</dbReference>
<dbReference type="InterPro" id="IPR005905">
    <property type="entry name" value="D_ala_D_ala"/>
</dbReference>
<dbReference type="InterPro" id="IPR011095">
    <property type="entry name" value="Dala_Dala_lig_C"/>
</dbReference>
<dbReference type="InterPro" id="IPR011127">
    <property type="entry name" value="Dala_Dala_lig_N"/>
</dbReference>
<dbReference type="InterPro" id="IPR016185">
    <property type="entry name" value="PreATP-grasp_dom_sf"/>
</dbReference>
<dbReference type="NCBIfam" id="TIGR01205">
    <property type="entry name" value="D_ala_D_alaTIGR"/>
    <property type="match status" value="1"/>
</dbReference>
<dbReference type="NCBIfam" id="NF002378">
    <property type="entry name" value="PRK01372.1"/>
    <property type="match status" value="1"/>
</dbReference>
<dbReference type="NCBIfam" id="NF002528">
    <property type="entry name" value="PRK01966.1-4"/>
    <property type="match status" value="1"/>
</dbReference>
<dbReference type="PANTHER" id="PTHR23132">
    <property type="entry name" value="D-ALANINE--D-ALANINE LIGASE"/>
    <property type="match status" value="1"/>
</dbReference>
<dbReference type="PANTHER" id="PTHR23132:SF25">
    <property type="entry name" value="D-ALANINE--D-ALANINE LIGASE A"/>
    <property type="match status" value="1"/>
</dbReference>
<dbReference type="Pfam" id="PF07478">
    <property type="entry name" value="Dala_Dala_lig_C"/>
    <property type="match status" value="1"/>
</dbReference>
<dbReference type="Pfam" id="PF01820">
    <property type="entry name" value="Dala_Dala_lig_N"/>
    <property type="match status" value="1"/>
</dbReference>
<dbReference type="PIRSF" id="PIRSF039102">
    <property type="entry name" value="Ddl/VanB"/>
    <property type="match status" value="1"/>
</dbReference>
<dbReference type="SUPFAM" id="SSF56059">
    <property type="entry name" value="Glutathione synthetase ATP-binding domain-like"/>
    <property type="match status" value="1"/>
</dbReference>
<dbReference type="SUPFAM" id="SSF52440">
    <property type="entry name" value="PreATP-grasp domain"/>
    <property type="match status" value="1"/>
</dbReference>
<dbReference type="PROSITE" id="PS50975">
    <property type="entry name" value="ATP_GRASP"/>
    <property type="match status" value="1"/>
</dbReference>
<dbReference type="PROSITE" id="PS00843">
    <property type="entry name" value="DALA_DALA_LIGASE_1"/>
    <property type="match status" value="1"/>
</dbReference>
<dbReference type="PROSITE" id="PS00844">
    <property type="entry name" value="DALA_DALA_LIGASE_2"/>
    <property type="match status" value="1"/>
</dbReference>
<evidence type="ECO:0000250" key="1"/>
<evidence type="ECO:0000255" key="2">
    <source>
        <dbReference type="HAMAP-Rule" id="MF_00047"/>
    </source>
</evidence>
<organism>
    <name type="scientific">Deinococcus geothermalis (strain DSM 11300 / CIP 105573 / AG-3a)</name>
    <dbReference type="NCBI Taxonomy" id="319795"/>
    <lineage>
        <taxon>Bacteria</taxon>
        <taxon>Thermotogati</taxon>
        <taxon>Deinococcota</taxon>
        <taxon>Deinococci</taxon>
        <taxon>Deinococcales</taxon>
        <taxon>Deinococcaceae</taxon>
        <taxon>Deinococcus</taxon>
    </lineage>
</organism>
<comment type="function">
    <text evidence="2">Cell wall formation.</text>
</comment>
<comment type="catalytic activity">
    <reaction evidence="2">
        <text>2 D-alanine + ATP = D-alanyl-D-alanine + ADP + phosphate + H(+)</text>
        <dbReference type="Rhea" id="RHEA:11224"/>
        <dbReference type="ChEBI" id="CHEBI:15378"/>
        <dbReference type="ChEBI" id="CHEBI:30616"/>
        <dbReference type="ChEBI" id="CHEBI:43474"/>
        <dbReference type="ChEBI" id="CHEBI:57416"/>
        <dbReference type="ChEBI" id="CHEBI:57822"/>
        <dbReference type="ChEBI" id="CHEBI:456216"/>
        <dbReference type="EC" id="6.3.2.4"/>
    </reaction>
</comment>
<comment type="cofactor">
    <cofactor evidence="1">
        <name>Mg(2+)</name>
        <dbReference type="ChEBI" id="CHEBI:18420"/>
    </cofactor>
    <cofactor evidence="1">
        <name>Mn(2+)</name>
        <dbReference type="ChEBI" id="CHEBI:29035"/>
    </cofactor>
    <text evidence="1">Binds 2 magnesium or manganese ions per subunit.</text>
</comment>
<comment type="pathway">
    <text evidence="2">Cell wall biogenesis; peptidoglycan biosynthesis.</text>
</comment>
<comment type="subcellular location">
    <subcellularLocation>
        <location evidence="2">Cytoplasm</location>
    </subcellularLocation>
</comment>
<comment type="similarity">
    <text evidence="2">Belongs to the D-alanine--D-alanine ligase family.</text>
</comment>
<feature type="chain" id="PRO_1000030444" description="D-alanine--D-alanine ligase">
    <location>
        <begin position="1"/>
        <end position="339"/>
    </location>
</feature>
<feature type="domain" description="ATP-grasp" evidence="2">
    <location>
        <begin position="126"/>
        <end position="333"/>
    </location>
</feature>
<feature type="binding site" evidence="2">
    <location>
        <begin position="158"/>
        <end position="213"/>
    </location>
    <ligand>
        <name>ATP</name>
        <dbReference type="ChEBI" id="CHEBI:30616"/>
    </ligand>
</feature>
<feature type="binding site" evidence="2">
    <location>
        <position position="286"/>
    </location>
    <ligand>
        <name>Mg(2+)</name>
        <dbReference type="ChEBI" id="CHEBI:18420"/>
        <label>1</label>
    </ligand>
</feature>
<feature type="binding site" evidence="2">
    <location>
        <position position="300"/>
    </location>
    <ligand>
        <name>Mg(2+)</name>
        <dbReference type="ChEBI" id="CHEBI:18420"/>
        <label>1</label>
    </ligand>
</feature>
<feature type="binding site" evidence="2">
    <location>
        <position position="300"/>
    </location>
    <ligand>
        <name>Mg(2+)</name>
        <dbReference type="ChEBI" id="CHEBI:18420"/>
        <label>2</label>
    </ligand>
</feature>
<feature type="binding site" evidence="2">
    <location>
        <position position="302"/>
    </location>
    <ligand>
        <name>Mg(2+)</name>
        <dbReference type="ChEBI" id="CHEBI:18420"/>
        <label>2</label>
    </ligand>
</feature>
<gene>
    <name evidence="2" type="primary">ddl</name>
    <name type="ordered locus">Dgeo_2121</name>
</gene>
<accession>Q1IWG9</accession>
<keyword id="KW-0067">ATP-binding</keyword>
<keyword id="KW-0133">Cell shape</keyword>
<keyword id="KW-0961">Cell wall biogenesis/degradation</keyword>
<keyword id="KW-0963">Cytoplasm</keyword>
<keyword id="KW-0436">Ligase</keyword>
<keyword id="KW-0460">Magnesium</keyword>
<keyword id="KW-0464">Manganese</keyword>
<keyword id="KW-0479">Metal-binding</keyword>
<keyword id="KW-0547">Nucleotide-binding</keyword>
<keyword id="KW-0573">Peptidoglycan synthesis</keyword>
<name>DDL_DEIGD</name>
<sequence>MKKRILLLAGGQSEEHEVSLRSARSVLAALPRDQFDVTPVVISPQGRWLPPTDTQRALETGEAVRGGDLVLHRAASAEGYDAVFPLLHGPMGEDGTIQGLLTLAGIPFVGSGVLGSAVSMDKVMTKQVLASVGMPQVAWRLAVRREWQERPQEVRARAGELGYPLFVKPANLGSSVGISKVSGPGELERALDLAFSLGRRVILEAMTAHKPRELEVGILGNDAPIASPVGELRFEADFYDYETKYTEGRATMHIPAPLPPEIAERVRMLALTAFRTLDCAGLARVDFFYVEQTGELFLNEVNTMPGFTTTSMYPKLFEAAGLSYSELVTRLVELALERR</sequence>